<organism>
    <name type="scientific">Thermoplasma acidophilum (strain ATCC 25905 / DSM 1728 / JCM 9062 / NBRC 15155 / AMRC-C165)</name>
    <dbReference type="NCBI Taxonomy" id="273075"/>
    <lineage>
        <taxon>Archaea</taxon>
        <taxon>Methanobacteriati</taxon>
        <taxon>Thermoplasmatota</taxon>
        <taxon>Thermoplasmata</taxon>
        <taxon>Thermoplasmatales</taxon>
        <taxon>Thermoplasmataceae</taxon>
        <taxon>Thermoplasma</taxon>
    </lineage>
</organism>
<dbReference type="EMBL" id="AL445067">
    <property type="protein sequence ID" value="CAC12365.1"/>
    <property type="molecule type" value="Genomic_DNA"/>
</dbReference>
<dbReference type="SMR" id="Q9HIT7"/>
<dbReference type="FunCoup" id="Q9HIT7">
    <property type="interactions" value="106"/>
</dbReference>
<dbReference type="STRING" id="273075.gene:9572464"/>
<dbReference type="PaxDb" id="273075-Ta1241"/>
<dbReference type="EnsemblBacteria" id="CAC12365">
    <property type="protein sequence ID" value="CAC12365"/>
    <property type="gene ID" value="CAC12365"/>
</dbReference>
<dbReference type="KEGG" id="tac:Ta1241"/>
<dbReference type="eggNOG" id="arCOG04126">
    <property type="taxonomic scope" value="Archaea"/>
</dbReference>
<dbReference type="HOGENOM" id="CLU_208825_0_0_2"/>
<dbReference type="InParanoid" id="Q9HIT7"/>
<dbReference type="OrthoDB" id="5619at2157"/>
<dbReference type="Proteomes" id="UP000001024">
    <property type="component" value="Chromosome"/>
</dbReference>
<dbReference type="GO" id="GO:0022625">
    <property type="term" value="C:cytosolic large ribosomal subunit"/>
    <property type="evidence" value="ECO:0007669"/>
    <property type="project" value="TreeGrafter"/>
</dbReference>
<dbReference type="GO" id="GO:0019843">
    <property type="term" value="F:rRNA binding"/>
    <property type="evidence" value="ECO:0007669"/>
    <property type="project" value="UniProtKB-KW"/>
</dbReference>
<dbReference type="GO" id="GO:0003735">
    <property type="term" value="F:structural constituent of ribosome"/>
    <property type="evidence" value="ECO:0007669"/>
    <property type="project" value="InterPro"/>
</dbReference>
<dbReference type="GO" id="GO:0008270">
    <property type="term" value="F:zinc ion binding"/>
    <property type="evidence" value="ECO:0007669"/>
    <property type="project" value="UniProtKB-UniRule"/>
</dbReference>
<dbReference type="GO" id="GO:0006412">
    <property type="term" value="P:translation"/>
    <property type="evidence" value="ECO:0007669"/>
    <property type="project" value="UniProtKB-UniRule"/>
</dbReference>
<dbReference type="Gene3D" id="2.20.25.30">
    <property type="match status" value="1"/>
</dbReference>
<dbReference type="HAMAP" id="MF_00547">
    <property type="entry name" value="Ribosomal_eL37"/>
    <property type="match status" value="1"/>
</dbReference>
<dbReference type="InterPro" id="IPR001569">
    <property type="entry name" value="Ribosomal_eL37"/>
</dbReference>
<dbReference type="InterPro" id="IPR011331">
    <property type="entry name" value="Ribosomal_eL37/eL43"/>
</dbReference>
<dbReference type="InterPro" id="IPR018267">
    <property type="entry name" value="Ribosomal_eL37_CS"/>
</dbReference>
<dbReference type="InterPro" id="IPR011332">
    <property type="entry name" value="Ribosomal_zn-bd"/>
</dbReference>
<dbReference type="NCBIfam" id="NF003214">
    <property type="entry name" value="PRK04179.1"/>
    <property type="match status" value="1"/>
</dbReference>
<dbReference type="PANTHER" id="PTHR10768">
    <property type="entry name" value="60S RIBOSOMAL PROTEIN L37"/>
    <property type="match status" value="1"/>
</dbReference>
<dbReference type="PANTHER" id="PTHR10768:SF0">
    <property type="entry name" value="RIBOSOMAL PROTEIN L37"/>
    <property type="match status" value="1"/>
</dbReference>
<dbReference type="Pfam" id="PF01907">
    <property type="entry name" value="Ribosomal_L37e"/>
    <property type="match status" value="1"/>
</dbReference>
<dbReference type="SUPFAM" id="SSF57829">
    <property type="entry name" value="Zn-binding ribosomal proteins"/>
    <property type="match status" value="1"/>
</dbReference>
<dbReference type="PROSITE" id="PS01077">
    <property type="entry name" value="RIBOSOMAL_L37E"/>
    <property type="match status" value="1"/>
</dbReference>
<comment type="function">
    <text evidence="1">Binds to the 23S rRNA.</text>
</comment>
<comment type="cofactor">
    <cofactor evidence="1">
        <name>Zn(2+)</name>
        <dbReference type="ChEBI" id="CHEBI:29105"/>
    </cofactor>
    <text evidence="1">Binds 1 zinc ion per subunit.</text>
</comment>
<comment type="similarity">
    <text evidence="3">Belongs to the eukaryotic ribosomal protein eL37 family.</text>
</comment>
<feature type="chain" id="PRO_0000139741" description="Large ribosomal subunit protein eL37">
    <location>
        <begin position="1"/>
        <end position="54"/>
    </location>
</feature>
<feature type="zinc finger region" description="C4-type" evidence="2">
    <location>
        <begin position="20"/>
        <end position="38"/>
    </location>
</feature>
<feature type="binding site" evidence="1">
    <location>
        <position position="20"/>
    </location>
    <ligand>
        <name>Zn(2+)</name>
        <dbReference type="ChEBI" id="CHEBI:29105"/>
    </ligand>
</feature>
<feature type="binding site" evidence="1">
    <location>
        <position position="23"/>
    </location>
    <ligand>
        <name>Zn(2+)</name>
        <dbReference type="ChEBI" id="CHEBI:29105"/>
    </ligand>
</feature>
<feature type="binding site" evidence="1">
    <location>
        <position position="35"/>
    </location>
    <ligand>
        <name>Zn(2+)</name>
        <dbReference type="ChEBI" id="CHEBI:29105"/>
    </ligand>
</feature>
<feature type="binding site" evidence="1">
    <location>
        <position position="38"/>
    </location>
    <ligand>
        <name>Zn(2+)</name>
        <dbReference type="ChEBI" id="CHEBI:29105"/>
    </ligand>
</feature>
<accession>Q9HIT7</accession>
<sequence length="54" mass="6286">MSNGTAVMGKINNKKTHIRCRRCGHHTYNVRTKRCSHCGFPAPRIRSYRWAKAK</sequence>
<gene>
    <name type="primary">rpl37e</name>
    <name type="ordered locus">Ta1241</name>
</gene>
<name>RL37_THEAC</name>
<proteinExistence type="inferred from homology"/>
<keyword id="KW-0479">Metal-binding</keyword>
<keyword id="KW-1185">Reference proteome</keyword>
<keyword id="KW-0687">Ribonucleoprotein</keyword>
<keyword id="KW-0689">Ribosomal protein</keyword>
<keyword id="KW-0694">RNA-binding</keyword>
<keyword id="KW-0699">rRNA-binding</keyword>
<keyword id="KW-0862">Zinc</keyword>
<keyword id="KW-0863">Zinc-finger</keyword>
<reference key="1">
    <citation type="journal article" date="2000" name="Nature">
        <title>The genome sequence of the thermoacidophilic scavenger Thermoplasma acidophilum.</title>
        <authorList>
            <person name="Ruepp A."/>
            <person name="Graml W."/>
            <person name="Santos-Martinez M.-L."/>
            <person name="Koretke K.K."/>
            <person name="Volker C."/>
            <person name="Mewes H.-W."/>
            <person name="Frishman D."/>
            <person name="Stocker S."/>
            <person name="Lupas A.N."/>
            <person name="Baumeister W."/>
        </authorList>
    </citation>
    <scope>NUCLEOTIDE SEQUENCE [LARGE SCALE GENOMIC DNA]</scope>
    <source>
        <strain>ATCC 25905 / DSM 1728 / JCM 9062 / NBRC 15155 / AMRC-C165</strain>
    </source>
</reference>
<protein>
    <recommendedName>
        <fullName evidence="3">Large ribosomal subunit protein eL37</fullName>
    </recommendedName>
    <alternativeName>
        <fullName>50S ribosomal protein L37e</fullName>
    </alternativeName>
</protein>
<evidence type="ECO:0000250" key="1"/>
<evidence type="ECO:0000255" key="2"/>
<evidence type="ECO:0000305" key="3"/>